<proteinExistence type="inferred from homology"/>
<accession>Q83LI9</accession>
<name>YCEI_SHIFL</name>
<comment type="subcellular location">
    <subcellularLocation>
        <location evidence="1">Periplasm</location>
    </subcellularLocation>
</comment>
<comment type="similarity">
    <text evidence="1">Belongs to the UPF0312 family. Type 1 subfamily.</text>
</comment>
<reference key="1">
    <citation type="journal article" date="2002" name="Nucleic Acids Res.">
        <title>Genome sequence of Shigella flexneri 2a: insights into pathogenicity through comparison with genomes of Escherichia coli K12 and O157.</title>
        <authorList>
            <person name="Jin Q."/>
            <person name="Yuan Z."/>
            <person name="Xu J."/>
            <person name="Wang Y."/>
            <person name="Shen Y."/>
            <person name="Lu W."/>
            <person name="Wang J."/>
            <person name="Liu H."/>
            <person name="Yang J."/>
            <person name="Yang F."/>
            <person name="Zhang X."/>
            <person name="Zhang J."/>
            <person name="Yang G."/>
            <person name="Wu H."/>
            <person name="Qu D."/>
            <person name="Dong J."/>
            <person name="Sun L."/>
            <person name="Xue Y."/>
            <person name="Zhao A."/>
            <person name="Gao Y."/>
            <person name="Zhu J."/>
            <person name="Kan B."/>
            <person name="Ding K."/>
            <person name="Chen S."/>
            <person name="Cheng H."/>
            <person name="Yao Z."/>
            <person name="He B."/>
            <person name="Chen R."/>
            <person name="Ma D."/>
            <person name="Qiang B."/>
            <person name="Wen Y."/>
            <person name="Hou Y."/>
            <person name="Yu J."/>
        </authorList>
    </citation>
    <scope>NUCLEOTIDE SEQUENCE [LARGE SCALE GENOMIC DNA]</scope>
    <source>
        <strain>301 / Serotype 2a</strain>
    </source>
</reference>
<reference key="2">
    <citation type="journal article" date="2003" name="Infect. Immun.">
        <title>Complete genome sequence and comparative genomics of Shigella flexneri serotype 2a strain 2457T.</title>
        <authorList>
            <person name="Wei J."/>
            <person name="Goldberg M.B."/>
            <person name="Burland V."/>
            <person name="Venkatesan M.M."/>
            <person name="Deng W."/>
            <person name="Fournier G."/>
            <person name="Mayhew G.F."/>
            <person name="Plunkett G. III"/>
            <person name="Rose D.J."/>
            <person name="Darling A."/>
            <person name="Mau B."/>
            <person name="Perna N.T."/>
            <person name="Payne S.M."/>
            <person name="Runyen-Janecky L.J."/>
            <person name="Zhou S."/>
            <person name="Schwartz D.C."/>
            <person name="Blattner F.R."/>
        </authorList>
    </citation>
    <scope>NUCLEOTIDE SEQUENCE [LARGE SCALE GENOMIC DNA]</scope>
    <source>
        <strain>ATCC 700930 / 2457T / Serotype 2a</strain>
    </source>
</reference>
<keyword id="KW-0574">Periplasm</keyword>
<keyword id="KW-1185">Reference proteome</keyword>
<keyword id="KW-0732">Signal</keyword>
<dbReference type="EMBL" id="AE005674">
    <property type="protein sequence ID" value="AAN42685.1"/>
    <property type="molecule type" value="Genomic_DNA"/>
</dbReference>
<dbReference type="EMBL" id="AE014073">
    <property type="protein sequence ID" value="AAP16571.1"/>
    <property type="molecule type" value="Genomic_DNA"/>
</dbReference>
<dbReference type="RefSeq" id="NP_706978.1">
    <property type="nucleotide sequence ID" value="NC_004337.2"/>
</dbReference>
<dbReference type="RefSeq" id="WP_000749269.1">
    <property type="nucleotide sequence ID" value="NZ_WPGW01000001.1"/>
</dbReference>
<dbReference type="SMR" id="Q83LI9"/>
<dbReference type="STRING" id="198214.SF1063"/>
<dbReference type="PaxDb" id="198214-SF1063"/>
<dbReference type="GeneID" id="1024015"/>
<dbReference type="KEGG" id="sfl:SF1063"/>
<dbReference type="KEGG" id="sfx:S1140"/>
<dbReference type="PATRIC" id="fig|198214.7.peg.1244"/>
<dbReference type="HOGENOM" id="CLU_071003_1_2_6"/>
<dbReference type="Proteomes" id="UP000001006">
    <property type="component" value="Chromosome"/>
</dbReference>
<dbReference type="Proteomes" id="UP000002673">
    <property type="component" value="Chromosome"/>
</dbReference>
<dbReference type="GO" id="GO:0042597">
    <property type="term" value="C:periplasmic space"/>
    <property type="evidence" value="ECO:0007669"/>
    <property type="project" value="UniProtKB-SubCell"/>
</dbReference>
<dbReference type="Gene3D" id="2.40.128.110">
    <property type="entry name" value="Lipid/polyisoprenoid-binding, YceI-like"/>
    <property type="match status" value="1"/>
</dbReference>
<dbReference type="HAMAP" id="MF_00780">
    <property type="entry name" value="UPF0312"/>
    <property type="match status" value="1"/>
</dbReference>
<dbReference type="InterPro" id="IPR007372">
    <property type="entry name" value="Lipid/polyisoprenoid-bd_YceI"/>
</dbReference>
<dbReference type="InterPro" id="IPR036761">
    <property type="entry name" value="TTHA0802/YceI-like_sf"/>
</dbReference>
<dbReference type="InterPro" id="IPR023480">
    <property type="entry name" value="UPF0312/YceI"/>
</dbReference>
<dbReference type="NCBIfam" id="NF002994">
    <property type="entry name" value="PRK03757.1"/>
    <property type="match status" value="1"/>
</dbReference>
<dbReference type="PANTHER" id="PTHR34406">
    <property type="entry name" value="PROTEIN YCEI"/>
    <property type="match status" value="1"/>
</dbReference>
<dbReference type="PANTHER" id="PTHR34406:SF1">
    <property type="entry name" value="PROTEIN YCEI"/>
    <property type="match status" value="1"/>
</dbReference>
<dbReference type="Pfam" id="PF04264">
    <property type="entry name" value="YceI"/>
    <property type="match status" value="1"/>
</dbReference>
<dbReference type="SMART" id="SM00867">
    <property type="entry name" value="YceI"/>
    <property type="match status" value="1"/>
</dbReference>
<dbReference type="SUPFAM" id="SSF101874">
    <property type="entry name" value="YceI-like"/>
    <property type="match status" value="1"/>
</dbReference>
<gene>
    <name evidence="1" type="primary">yceI</name>
    <name type="ordered locus">SF1063</name>
    <name type="ordered locus">S1140</name>
</gene>
<sequence>MKKSLLGLTFASLMFSAGSAVAADYKIDKEGQHAFVNFRIQHLGYSWLYGTFKDFDGTFTFDEKNPAADKVNVTINTTSVDTNHAERDKHLRSADFLNTTKYPQATFTSTSVKKDGDELDITGDLTLNGVTKPVTLEAKLIGQGDDPWGGKRAGFEAEGKIKLKDFNIKTDLGPASQEVDLIISVEGVQQK</sequence>
<evidence type="ECO:0000255" key="1">
    <source>
        <dbReference type="HAMAP-Rule" id="MF_00780"/>
    </source>
</evidence>
<feature type="signal peptide" evidence="1">
    <location>
        <begin position="1"/>
        <end position="22"/>
    </location>
</feature>
<feature type="chain" id="PRO_0000036286" description="Protein YceI">
    <location>
        <begin position="23"/>
        <end position="191"/>
    </location>
</feature>
<protein>
    <recommendedName>
        <fullName evidence="1">Protein YceI</fullName>
    </recommendedName>
</protein>
<organism>
    <name type="scientific">Shigella flexneri</name>
    <dbReference type="NCBI Taxonomy" id="623"/>
    <lineage>
        <taxon>Bacteria</taxon>
        <taxon>Pseudomonadati</taxon>
        <taxon>Pseudomonadota</taxon>
        <taxon>Gammaproteobacteria</taxon>
        <taxon>Enterobacterales</taxon>
        <taxon>Enterobacteriaceae</taxon>
        <taxon>Shigella</taxon>
    </lineage>
</organism>